<keyword id="KW-0143">Chaperone</keyword>
<keyword id="KW-0963">Cytoplasm</keyword>
<keyword id="KW-0346">Stress response</keyword>
<dbReference type="EMBL" id="CP000393">
    <property type="protein sequence ID" value="ABG51009.1"/>
    <property type="molecule type" value="Genomic_DNA"/>
</dbReference>
<dbReference type="RefSeq" id="WP_011611384.1">
    <property type="nucleotide sequence ID" value="NC_008312.1"/>
</dbReference>
<dbReference type="SMR" id="Q114R5"/>
<dbReference type="STRING" id="203124.Tery_1749"/>
<dbReference type="KEGG" id="ter:Tery_1749"/>
<dbReference type="eggNOG" id="COG0576">
    <property type="taxonomic scope" value="Bacteria"/>
</dbReference>
<dbReference type="HOGENOM" id="CLU_057217_5_1_3"/>
<dbReference type="OrthoDB" id="9812586at2"/>
<dbReference type="GO" id="GO:0005737">
    <property type="term" value="C:cytoplasm"/>
    <property type="evidence" value="ECO:0007669"/>
    <property type="project" value="UniProtKB-SubCell"/>
</dbReference>
<dbReference type="GO" id="GO:0000774">
    <property type="term" value="F:adenyl-nucleotide exchange factor activity"/>
    <property type="evidence" value="ECO:0007669"/>
    <property type="project" value="InterPro"/>
</dbReference>
<dbReference type="GO" id="GO:0042803">
    <property type="term" value="F:protein homodimerization activity"/>
    <property type="evidence" value="ECO:0007669"/>
    <property type="project" value="InterPro"/>
</dbReference>
<dbReference type="GO" id="GO:0051087">
    <property type="term" value="F:protein-folding chaperone binding"/>
    <property type="evidence" value="ECO:0007669"/>
    <property type="project" value="InterPro"/>
</dbReference>
<dbReference type="GO" id="GO:0051082">
    <property type="term" value="F:unfolded protein binding"/>
    <property type="evidence" value="ECO:0007669"/>
    <property type="project" value="TreeGrafter"/>
</dbReference>
<dbReference type="GO" id="GO:0006457">
    <property type="term" value="P:protein folding"/>
    <property type="evidence" value="ECO:0007669"/>
    <property type="project" value="InterPro"/>
</dbReference>
<dbReference type="CDD" id="cd00446">
    <property type="entry name" value="GrpE"/>
    <property type="match status" value="1"/>
</dbReference>
<dbReference type="FunFam" id="2.30.22.10:FF:000001">
    <property type="entry name" value="Protein GrpE"/>
    <property type="match status" value="1"/>
</dbReference>
<dbReference type="Gene3D" id="3.90.20.20">
    <property type="match status" value="1"/>
</dbReference>
<dbReference type="Gene3D" id="2.30.22.10">
    <property type="entry name" value="Head domain of nucleotide exchange factor GrpE"/>
    <property type="match status" value="1"/>
</dbReference>
<dbReference type="HAMAP" id="MF_01151">
    <property type="entry name" value="GrpE"/>
    <property type="match status" value="1"/>
</dbReference>
<dbReference type="InterPro" id="IPR000740">
    <property type="entry name" value="GrpE"/>
</dbReference>
<dbReference type="InterPro" id="IPR013805">
    <property type="entry name" value="GrpE_coiled_coil"/>
</dbReference>
<dbReference type="InterPro" id="IPR009012">
    <property type="entry name" value="GrpE_head"/>
</dbReference>
<dbReference type="NCBIfam" id="NF010741">
    <property type="entry name" value="PRK14143.1"/>
    <property type="match status" value="1"/>
</dbReference>
<dbReference type="PANTHER" id="PTHR21237">
    <property type="entry name" value="GRPE PROTEIN"/>
    <property type="match status" value="1"/>
</dbReference>
<dbReference type="PANTHER" id="PTHR21237:SF23">
    <property type="entry name" value="GRPE PROTEIN HOMOLOG, MITOCHONDRIAL"/>
    <property type="match status" value="1"/>
</dbReference>
<dbReference type="Pfam" id="PF01025">
    <property type="entry name" value="GrpE"/>
    <property type="match status" value="1"/>
</dbReference>
<dbReference type="PRINTS" id="PR00773">
    <property type="entry name" value="GRPEPROTEIN"/>
</dbReference>
<dbReference type="SUPFAM" id="SSF58014">
    <property type="entry name" value="Coiled-coil domain of nucleotide exchange factor GrpE"/>
    <property type="match status" value="1"/>
</dbReference>
<dbReference type="SUPFAM" id="SSF51064">
    <property type="entry name" value="Head domain of nucleotide exchange factor GrpE"/>
    <property type="match status" value="1"/>
</dbReference>
<dbReference type="PROSITE" id="PS01071">
    <property type="entry name" value="GRPE"/>
    <property type="match status" value="1"/>
</dbReference>
<accession>Q114R5</accession>
<protein>
    <recommendedName>
        <fullName evidence="1">Protein GrpE</fullName>
    </recommendedName>
    <alternativeName>
        <fullName evidence="1">HSP-70 cofactor</fullName>
    </alternativeName>
</protein>
<name>GRPE_TRIEI</name>
<sequence>MAGENSSTETKNQEINEKTPEVQTFETNVEFESSQKVESDTELSADNASIDTDIQSTESTSKEKDQVLLKEAYELLQTQLETTKYQLEEKESQYKRLGADFDNFRKRTQKEKEDLDTQVKCSTIMELLPVIDNFERARSHIKPANDGEMAIHKSYQSVYKQMVDSLKRLGVSVMRPEGQEFDPNLHEAVMREATAEHPEGTVIEELVRGYILGERVLRHAMVKVATAPDTDAETENQTDPES</sequence>
<reference key="1">
    <citation type="journal article" date="2015" name="Proc. Natl. Acad. Sci. U.S.A.">
        <title>Trichodesmium genome maintains abundant, widespread noncoding DNA in situ, despite oligotrophic lifestyle.</title>
        <authorList>
            <person name="Walworth N."/>
            <person name="Pfreundt U."/>
            <person name="Nelson W.C."/>
            <person name="Mincer T."/>
            <person name="Heidelberg J.F."/>
            <person name="Fu F."/>
            <person name="Waterbury J.B."/>
            <person name="Glavina del Rio T."/>
            <person name="Goodwin L."/>
            <person name="Kyrpides N.C."/>
            <person name="Land M.L."/>
            <person name="Woyke T."/>
            <person name="Hutchins D.A."/>
            <person name="Hess W.R."/>
            <person name="Webb E.A."/>
        </authorList>
    </citation>
    <scope>NUCLEOTIDE SEQUENCE [LARGE SCALE GENOMIC DNA]</scope>
    <source>
        <strain>IMS101</strain>
    </source>
</reference>
<gene>
    <name evidence="1" type="primary">grpE</name>
    <name type="ordered locus">Tery_1749</name>
</gene>
<proteinExistence type="inferred from homology"/>
<feature type="chain" id="PRO_1000053658" description="Protein GrpE">
    <location>
        <begin position="1"/>
        <end position="242"/>
    </location>
</feature>
<feature type="region of interest" description="Disordered" evidence="2">
    <location>
        <begin position="1"/>
        <end position="64"/>
    </location>
</feature>
<feature type="compositionally biased region" description="Polar residues" evidence="2">
    <location>
        <begin position="1"/>
        <end position="10"/>
    </location>
</feature>
<feature type="compositionally biased region" description="Basic and acidic residues" evidence="2">
    <location>
        <begin position="11"/>
        <end position="20"/>
    </location>
</feature>
<feature type="compositionally biased region" description="Polar residues" evidence="2">
    <location>
        <begin position="21"/>
        <end position="32"/>
    </location>
</feature>
<feature type="compositionally biased region" description="Polar residues" evidence="2">
    <location>
        <begin position="40"/>
        <end position="59"/>
    </location>
</feature>
<evidence type="ECO:0000255" key="1">
    <source>
        <dbReference type="HAMAP-Rule" id="MF_01151"/>
    </source>
</evidence>
<evidence type="ECO:0000256" key="2">
    <source>
        <dbReference type="SAM" id="MobiDB-lite"/>
    </source>
</evidence>
<comment type="function">
    <text evidence="1">Participates actively in the response to hyperosmotic and heat shock by preventing the aggregation of stress-denatured proteins, in association with DnaK and GrpE. It is the nucleotide exchange factor for DnaK and may function as a thermosensor. Unfolded proteins bind initially to DnaJ; upon interaction with the DnaJ-bound protein, DnaK hydrolyzes its bound ATP, resulting in the formation of a stable complex. GrpE releases ADP from DnaK; ATP binding to DnaK triggers the release of the substrate protein, thus completing the reaction cycle. Several rounds of ATP-dependent interactions between DnaJ, DnaK and GrpE are required for fully efficient folding.</text>
</comment>
<comment type="subunit">
    <text evidence="1">Homodimer.</text>
</comment>
<comment type="subcellular location">
    <subcellularLocation>
        <location evidence="1">Cytoplasm</location>
    </subcellularLocation>
</comment>
<comment type="similarity">
    <text evidence="1">Belongs to the GrpE family.</text>
</comment>
<organism>
    <name type="scientific">Trichodesmium erythraeum (strain IMS101)</name>
    <dbReference type="NCBI Taxonomy" id="203124"/>
    <lineage>
        <taxon>Bacteria</taxon>
        <taxon>Bacillati</taxon>
        <taxon>Cyanobacteriota</taxon>
        <taxon>Cyanophyceae</taxon>
        <taxon>Oscillatoriophycideae</taxon>
        <taxon>Oscillatoriales</taxon>
        <taxon>Microcoleaceae</taxon>
        <taxon>Trichodesmium</taxon>
    </lineage>
</organism>